<comment type="function">
    <text evidence="1 5 6">E3 ubiquitin-protein ligase that catalyzes monoubiquitination of 40S ribosomal proteins RPS2/us5 and RPS3/us3 in response to ribosome stalling (PubMed:34348161, PubMed:34469731). Part of a ribosome quality control that takes place when ribosomes have stalled during translation initiation (iRQC): RNF10 acts by mediating monoubiquitination of RPS2/us5 and RPS3/us3, promoting their degradation by the proteasome (PubMed:34348161, PubMed:34469731). Also promotes ubiquitination of 40S ribosomal proteins in response to ribosome stalling during translation elongation (PubMed:34348161). The action of RNF10 in iRQC is counteracted by USP10 (PubMed:34469731). May also act as a transcriptional factor involved in the regulation of MAG (Myelin-associated glycoprotein) expression (By similarity). Acts as a regulator of Schwann cell differentiation and myelination (By similarity).</text>
</comment>
<comment type="catalytic activity">
    <reaction evidence="5 6">
        <text>S-ubiquitinyl-[E2 ubiquitin-conjugating enzyme]-L-cysteine + [acceptor protein]-L-lysine = [E2 ubiquitin-conjugating enzyme]-L-cysteine + N(6)-ubiquitinyl-[acceptor protein]-L-lysine.</text>
        <dbReference type="EC" id="2.3.2.27"/>
    </reaction>
</comment>
<comment type="pathway">
    <text evidence="5 6">Protein modification; protein ubiquitination.</text>
</comment>
<comment type="subunit">
    <text evidence="4">Interacts with MEOX2.</text>
</comment>
<comment type="interaction">
    <interactant intactId="EBI-714023">
        <id>Q8N5U6</id>
    </interactant>
    <interactant intactId="EBI-718729">
        <id>P55212</id>
        <label>CASP6</label>
    </interactant>
    <organismsDiffer>false</organismsDiffer>
    <experiments>3</experiments>
</comment>
<comment type="interaction">
    <interactant intactId="EBI-714023">
        <id>Q8N5U6</id>
    </interactant>
    <interactant intactId="EBI-16041593">
        <id>O94985-2</id>
        <label>CLSTN1</label>
    </interactant>
    <organismsDiffer>false</organismsDiffer>
    <experiments>3</experiments>
</comment>
<comment type="interaction">
    <interactant intactId="EBI-714023">
        <id>Q8N5U6</id>
    </interactant>
    <interactant intactId="EBI-745535">
        <id>Q8NI60</id>
        <label>COQ8A</label>
    </interactant>
    <organismsDiffer>false</organismsDiffer>
    <experiments>3</experiments>
</comment>
<comment type="interaction">
    <interactant intactId="EBI-714023">
        <id>Q8N5U6</id>
    </interactant>
    <interactant intactId="EBI-10976677">
        <id>G5E9A7</id>
        <label>DMWD</label>
    </interactant>
    <organismsDiffer>false</organismsDiffer>
    <experiments>3</experiments>
</comment>
<comment type="interaction">
    <interactant intactId="EBI-714023">
        <id>Q8N5U6</id>
    </interactant>
    <interactant intactId="EBI-473886">
        <id>O00291</id>
        <label>HIP1</label>
    </interactant>
    <organismsDiffer>false</organismsDiffer>
    <experiments>3</experiments>
</comment>
<comment type="interaction">
    <interactant intactId="EBI-714023">
        <id>Q8N5U6</id>
    </interactant>
    <interactant intactId="EBI-352682">
        <id>P04792</id>
        <label>HSPB1</label>
    </interactant>
    <organismsDiffer>false</organismsDiffer>
    <experiments>3</experiments>
</comment>
<comment type="interaction">
    <interactant intactId="EBI-714023">
        <id>Q8N5U6</id>
    </interactant>
    <interactant intactId="EBI-10975473">
        <id>O60333-2</id>
        <label>KIF1B</label>
    </interactant>
    <organismsDiffer>false</organismsDiffer>
    <experiments>3</experiments>
</comment>
<comment type="interaction">
    <interactant intactId="EBI-714023">
        <id>Q8N5U6</id>
    </interactant>
    <interactant intactId="EBI-21591415">
        <id>P13473-2</id>
        <label>LAMP2</label>
    </interactant>
    <organismsDiffer>false</organismsDiffer>
    <experiments>3</experiments>
</comment>
<comment type="interaction">
    <interactant intactId="EBI-714023">
        <id>Q8N5U6</id>
    </interactant>
    <interactant intactId="EBI-21251460">
        <id>O60260-5</id>
        <label>PRKN</label>
    </interactant>
    <organismsDiffer>false</organismsDiffer>
    <experiments>3</experiments>
</comment>
<comment type="interaction">
    <interactant intactId="EBI-714023">
        <id>Q8N5U6</id>
    </interactant>
    <interactant intactId="EBI-5280197">
        <id>O75400-2</id>
        <label>PRPF40A</label>
    </interactant>
    <organismsDiffer>false</organismsDiffer>
    <experiments>3</experiments>
</comment>
<comment type="interaction">
    <interactant intactId="EBI-714023">
        <id>Q8N5U6</id>
    </interactant>
    <interactant intactId="EBI-286642">
        <id>P62826</id>
        <label>RAN</label>
    </interactant>
    <organismsDiffer>false</organismsDiffer>
    <experiments>3</experiments>
</comment>
<comment type="interaction">
    <interactant intactId="EBI-714023">
        <id>Q8N5U6</id>
    </interactant>
    <interactant intactId="EBI-396669">
        <id>Q9Y3C5</id>
        <label>RNF11</label>
    </interactant>
    <organismsDiffer>false</organismsDiffer>
    <experiments>3</experiments>
</comment>
<comment type="interaction">
    <interactant intactId="EBI-714023">
        <id>Q8N5U6</id>
    </interactant>
    <interactant intactId="EBI-985879">
        <id>P37840</id>
        <label>SNCA</label>
    </interactant>
    <organismsDiffer>false</organismsDiffer>
    <experiments>3</experiments>
</comment>
<comment type="interaction">
    <interactant intactId="EBI-714023">
        <id>Q8N5U6</id>
    </interactant>
    <interactant intactId="EBI-5235340">
        <id>Q7Z699</id>
        <label>SPRED1</label>
    </interactant>
    <organismsDiffer>false</organismsDiffer>
    <experiments>3</experiments>
</comment>
<comment type="interaction">
    <interactant intactId="EBI-714023">
        <id>Q8N5U6</id>
    </interactant>
    <interactant intactId="EBI-372899">
        <id>Q13148</id>
        <label>TARDBP</label>
    </interactant>
    <organismsDiffer>false</organismsDiffer>
    <experiments>3</experiments>
</comment>
<comment type="interaction">
    <interactant intactId="EBI-714023">
        <id>Q8N5U6</id>
    </interactant>
    <interactant intactId="EBI-710997">
        <id>P54274</id>
        <label>TERF1</label>
    </interactant>
    <organismsDiffer>false</organismsDiffer>
    <experiments>2</experiments>
</comment>
<comment type="interaction">
    <interactant intactId="EBI-714023">
        <id>Q8N5U6</id>
    </interactant>
    <interactant intactId="EBI-743540">
        <id>P51668</id>
        <label>UBE2D1</label>
    </interactant>
    <organismsDiffer>false</organismsDiffer>
    <experiments>3</experiments>
</comment>
<comment type="interaction">
    <interactant intactId="EBI-714023">
        <id>Q8N5U6</id>
    </interactant>
    <interactant intactId="EBI-347677">
        <id>P62837</id>
        <label>UBE2D2</label>
    </interactant>
    <organismsDiffer>false</organismsDiffer>
    <experiments>3</experiments>
</comment>
<comment type="interaction">
    <interactant intactId="EBI-714023">
        <id>Q8N5U6</id>
    </interactant>
    <interactant intactId="EBI-745527">
        <id>Q9Y2X8</id>
        <label>UBE2D4</label>
    </interactant>
    <organismsDiffer>false</organismsDiffer>
    <experiments>3</experiments>
</comment>
<comment type="interaction">
    <interactant intactId="EBI-714023">
        <id>Q8N5U6</id>
    </interactant>
    <interactant intactId="EBI-348496">
        <id>Q969T4</id>
        <label>UBE2E3</label>
    </interactant>
    <organismsDiffer>false</organismsDiffer>
    <experiments>3</experiments>
</comment>
<comment type="interaction">
    <interactant intactId="EBI-714023">
        <id>Q8N5U6</id>
    </interactant>
    <interactant intactId="EBI-720609">
        <id>O76024</id>
        <label>WFS1</label>
    </interactant>
    <organismsDiffer>false</organismsDiffer>
    <experiments>3</experiments>
</comment>
<comment type="interaction">
    <interactant intactId="EBI-714023">
        <id>Q8N5U6</id>
    </interactant>
    <interactant intactId="EBI-356498">
        <id>P62258</id>
        <label>YWHAE</label>
    </interactant>
    <organismsDiffer>false</organismsDiffer>
    <experiments>2</experiments>
</comment>
<comment type="subcellular location">
    <subcellularLocation>
        <location evidence="4">Cytoplasm</location>
    </subcellularLocation>
    <subcellularLocation>
        <location evidence="1">Nucleus</location>
    </subcellularLocation>
</comment>
<comment type="alternative products">
    <event type="alternative splicing"/>
    <isoform>
        <id>Q8N5U6-1</id>
        <name>1</name>
        <sequence type="displayed"/>
    </isoform>
    <isoform>
        <id>Q8N5U6-2</id>
        <name>2</name>
        <sequence type="described" ref="VSP_021478"/>
    </isoform>
</comment>
<comment type="similarity">
    <text evidence="11">Belongs to the RNF10 family.</text>
</comment>
<accession>Q8N5U6</accession>
<accession>Q92550</accession>
<accession>Q9NPP8</accession>
<accession>Q9ULW4</accession>
<protein>
    <recommendedName>
        <fullName evidence="11">E3 ubiquitin-protein ligase RNF10</fullName>
        <ecNumber evidence="5 6">2.3.2.27</ecNumber>
    </recommendedName>
    <alternativeName>
        <fullName evidence="11">RING finger protein 10</fullName>
    </alternativeName>
</protein>
<sequence>MPLSSPNAAATASDMDKNSGSNSSSASSGSSKGQQPPRSASAGPAGESKPKSDGKNSSGSKRYNRKRELSYPKNESFNNQSRRSSSQKSKTFNKMPPQRGGGSSKLFSSSFNGGRRDEVAEAQRAEFSPAQFSGPKKINLNHLLNFTFEPRGQTGHFEGSGHGSWGKRNKWGHKPFNKELFLQANCQFVVSEDQDYTAHFADPDTLVNWDFVEQVRICSHEVPSCPICLYPPTAAKITRCGHIFCWACILHYLSLSEKTWSKCPICYSSVHKKDLKSVVATESHQYVVGDTITMQLMKREKGVLVALPKSKWMNVDHPIHLGDEQHSQYSKLLLASKEQVLHRVVLEEKVALEQQLAEEKHTPESCFIEAAIQELKTREEALSGLAGSRREVTGVVAALEQLVLMAPLAKESVFQPRKGVLEYLSAFDEETTEVCSLDTPSRPLALPLVEEEEAVSEPEPEGLPEACDDLELADDNLKEGTICTESSQQEPITKSGFTRLSSSPCYYFYQAEDGQHMFLHPVNVRCLVREYGSLERSPEKISATVVEIAGYSMSEDVRQRHRYLSHLPLTCEFSICELALQPPVVSKETLEMFSDDIEKRKRQRQKKAREERRRERRIEIEENKKQGKYPEVHIPLENLQQFPAFNSYTCSSDSALGPTSTEGHGALSISPLSRSPGSHADFLLTPLSPTASQGSPSFCVGSLEEDSPFPSFAQMLRVGKAKADVWPKTAPKKDENSLVPPAPVDSDGESDNSDRVPVPSFQNSFSQAIEAAFMKLDTPATSDPLSEEKGGKKRKKQKQKLLFSTSVVHTK</sequence>
<name>RNF10_HUMAN</name>
<evidence type="ECO:0000250" key="1">
    <source>
        <dbReference type="UniProtKB" id="Q5XI59"/>
    </source>
</evidence>
<evidence type="ECO:0000255" key="2">
    <source>
        <dbReference type="PROSITE-ProRule" id="PRU00175"/>
    </source>
</evidence>
<evidence type="ECO:0000256" key="3">
    <source>
        <dbReference type="SAM" id="MobiDB-lite"/>
    </source>
</evidence>
<evidence type="ECO:0000269" key="4">
    <source>
    </source>
</evidence>
<evidence type="ECO:0000269" key="5">
    <source>
    </source>
</evidence>
<evidence type="ECO:0000269" key="6">
    <source>
    </source>
</evidence>
<evidence type="ECO:0000269" key="7">
    <source ref="6"/>
</evidence>
<evidence type="ECO:0000303" key="8">
    <source>
    </source>
</evidence>
<evidence type="ECO:0000303" key="9">
    <source>
    </source>
</evidence>
<evidence type="ECO:0000303" key="10">
    <source ref="6"/>
</evidence>
<evidence type="ECO:0000305" key="11"/>
<evidence type="ECO:0000312" key="12">
    <source>
        <dbReference type="HGNC" id="HGNC:10055"/>
    </source>
</evidence>
<evidence type="ECO:0007744" key="13">
    <source>
    </source>
</evidence>
<keyword id="KW-0025">Alternative splicing</keyword>
<keyword id="KW-0963">Cytoplasm</keyword>
<keyword id="KW-0238">DNA-binding</keyword>
<keyword id="KW-0479">Metal-binding</keyword>
<keyword id="KW-0539">Nucleus</keyword>
<keyword id="KW-0597">Phosphoprotein</keyword>
<keyword id="KW-1267">Proteomics identification</keyword>
<keyword id="KW-1185">Reference proteome</keyword>
<keyword id="KW-0804">Transcription</keyword>
<keyword id="KW-0805">Transcription regulation</keyword>
<keyword id="KW-0808">Transferase</keyword>
<keyword id="KW-0833">Ubl conjugation pathway</keyword>
<keyword id="KW-0862">Zinc</keyword>
<keyword id="KW-0863">Zinc-finger</keyword>
<feature type="chain" id="PRO_0000259585" description="E3 ubiquitin-protein ligase RNF10">
    <location>
        <begin position="1"/>
        <end position="811"/>
    </location>
</feature>
<feature type="zinc finger region" description="RING-type" evidence="2">
    <location>
        <begin position="225"/>
        <end position="267"/>
    </location>
</feature>
<feature type="region of interest" description="Disordered" evidence="3">
    <location>
        <begin position="1"/>
        <end position="119"/>
    </location>
</feature>
<feature type="region of interest" description="Interaction with MEOX2" evidence="4">
    <location>
        <begin position="101"/>
        <end position="185"/>
    </location>
</feature>
<feature type="region of interest" description="Disordered" evidence="3">
    <location>
        <begin position="653"/>
        <end position="672"/>
    </location>
</feature>
<feature type="region of interest" description="Disordered" evidence="3">
    <location>
        <begin position="724"/>
        <end position="761"/>
    </location>
</feature>
<feature type="region of interest" description="Disordered" evidence="3">
    <location>
        <begin position="776"/>
        <end position="811"/>
    </location>
</feature>
<feature type="compositionally biased region" description="Polar residues" evidence="3">
    <location>
        <begin position="1"/>
        <end position="10"/>
    </location>
</feature>
<feature type="compositionally biased region" description="Low complexity" evidence="3">
    <location>
        <begin position="18"/>
        <end position="31"/>
    </location>
</feature>
<feature type="compositionally biased region" description="Low complexity" evidence="3">
    <location>
        <begin position="78"/>
        <end position="90"/>
    </location>
</feature>
<feature type="compositionally biased region" description="Low complexity" evidence="3">
    <location>
        <begin position="104"/>
        <end position="113"/>
    </location>
</feature>
<feature type="compositionally biased region" description="Polar residues" evidence="3">
    <location>
        <begin position="653"/>
        <end position="662"/>
    </location>
</feature>
<feature type="compositionally biased region" description="Basic and acidic residues" evidence="3">
    <location>
        <begin position="724"/>
        <end position="736"/>
    </location>
</feature>
<feature type="compositionally biased region" description="Polar residues" evidence="3">
    <location>
        <begin position="802"/>
        <end position="811"/>
    </location>
</feature>
<feature type="modified residue" description="Phosphoserine" evidence="13">
    <location>
        <position position="5"/>
    </location>
</feature>
<feature type="modified residue" description="Phosphoserine" evidence="13">
    <location>
        <position position="110"/>
    </location>
</feature>
<feature type="modified residue" description="Phosphoserine" evidence="13">
    <location>
        <position position="128"/>
    </location>
</feature>
<feature type="splice variant" id="VSP_021478" description="In isoform 2." evidence="10">
    <original>K</original>
    <variation>KSLLQQ</variation>
    <location>
        <position position="418"/>
    </location>
</feature>
<feature type="sequence variant" id="VAR_028967" description="In dbSNP:rs17852961." evidence="7">
    <original>L</original>
    <variation>F</variation>
    <location>
        <position position="332"/>
    </location>
</feature>
<feature type="sequence variant" id="VAR_028968" description="In dbSNP:rs16950277.">
    <original>E</original>
    <variation>D</variation>
    <location>
        <position position="433"/>
    </location>
</feature>
<feature type="mutagenesis site" description="Abolished E3 ubiquitin-protein ligase activity and ability to monoubiquitinate RPS2/us5 and RPS3/us3." evidence="5">
    <original>CPIC</original>
    <variation>SPIS</variation>
    <location>
        <begin position="225"/>
        <end position="228"/>
    </location>
</feature>
<feature type="mutagenesis site" description="Abolished E3 ubiquitin-protein ligase activity and ability to monoubiquitinate RPS2/us5 and RPS3/us3." evidence="5">
    <original>C</original>
    <variation>S</variation>
    <location>
        <position position="225"/>
    </location>
</feature>
<feature type="mutagenesis site" description="Abolished E3 ubiquitin-protein ligase activity and ability to monoubiquitinate RPS2/us5 and RPS3/us3." evidence="5">
    <original>C</original>
    <variation>S</variation>
    <location>
        <position position="228"/>
    </location>
</feature>
<organism>
    <name type="scientific">Homo sapiens</name>
    <name type="common">Human</name>
    <dbReference type="NCBI Taxonomy" id="9606"/>
    <lineage>
        <taxon>Eukaryota</taxon>
        <taxon>Metazoa</taxon>
        <taxon>Chordata</taxon>
        <taxon>Craniata</taxon>
        <taxon>Vertebrata</taxon>
        <taxon>Euteleostomi</taxon>
        <taxon>Mammalia</taxon>
        <taxon>Eutheria</taxon>
        <taxon>Euarchontoglires</taxon>
        <taxon>Primates</taxon>
        <taxon>Haplorrhini</taxon>
        <taxon>Catarrhini</taxon>
        <taxon>Hominidae</taxon>
        <taxon>Homo</taxon>
    </lineage>
</organism>
<proteinExistence type="evidence at protein level"/>
<reference key="1">
    <citation type="journal article" date="2000" name="J. Hum. Genet.">
        <title>cDNA cloning, expression profile, and genomic structure of human and mouse RNF10/Rnf 10 genes, encoding a novel RING finger protein.</title>
        <authorList>
            <person name="Seki N."/>
            <person name="Hattori A."/>
            <person name="Sugano S."/>
            <person name="Muramatsu M."/>
            <person name="Saito T."/>
        </authorList>
    </citation>
    <scope>NUCLEOTIDE SEQUENCE [MRNA] (ISOFORM 1)</scope>
</reference>
<reference key="2">
    <citation type="journal article" date="1996" name="DNA Res.">
        <title>Prediction of the coding sequences of unidentified human genes. VI. The coding sequences of 80 new genes (KIAA0201-KIAA0280) deduced by analysis of cDNA clones from cell line KG-1 and brain.</title>
        <authorList>
            <person name="Nagase T."/>
            <person name="Seki N."/>
            <person name="Ishikawa K."/>
            <person name="Ohira M."/>
            <person name="Kawarabayasi Y."/>
            <person name="Ohara O."/>
            <person name="Tanaka A."/>
            <person name="Kotani H."/>
            <person name="Miyajima N."/>
            <person name="Nomura N."/>
        </authorList>
    </citation>
    <scope>NUCLEOTIDE SEQUENCE [LARGE SCALE MRNA] (ISOFORM 1)</scope>
    <source>
        <tissue>Bone marrow</tissue>
    </source>
</reference>
<reference key="3">
    <citation type="journal article" date="2002" name="DNA Res.">
        <title>Construction of expression-ready cDNA clones for KIAA genes: manual curation of 330 KIAA cDNA clones.</title>
        <authorList>
            <person name="Nakajima D."/>
            <person name="Okazaki N."/>
            <person name="Yamakawa H."/>
            <person name="Kikuno R."/>
            <person name="Ohara O."/>
            <person name="Nagase T."/>
        </authorList>
    </citation>
    <scope>SEQUENCE REVISION</scope>
</reference>
<reference key="4">
    <citation type="submission" date="2003-05" db="EMBL/GenBank/DDBJ databases">
        <title>Cloning of human full-length CDSs in BD Creator(TM) system donor vector.</title>
        <authorList>
            <person name="Kalnine N."/>
            <person name="Chen X."/>
            <person name="Rolfs A."/>
            <person name="Halleck A."/>
            <person name="Hines L."/>
            <person name="Eisenstein S."/>
            <person name="Koundinya M."/>
            <person name="Raphael J."/>
            <person name="Moreira D."/>
            <person name="Kelley T."/>
            <person name="LaBaer J."/>
            <person name="Lin Y."/>
            <person name="Phelan M."/>
            <person name="Farmer A."/>
        </authorList>
    </citation>
    <scope>NUCLEOTIDE SEQUENCE [LARGE SCALE MRNA]</scope>
</reference>
<reference key="5">
    <citation type="journal article" date="2004" name="Genome Res.">
        <title>The status, quality, and expansion of the NIH full-length cDNA project: the Mammalian Gene Collection (MGC).</title>
        <authorList>
            <consortium name="The MGC Project Team"/>
        </authorList>
    </citation>
    <scope>NUCLEOTIDE SEQUENCE [LARGE SCALE MRNA] (ISOFORM 1)</scope>
    <source>
        <tissue>Brain</tissue>
        <tissue>Eye</tissue>
        <tissue>Liver</tissue>
    </source>
</reference>
<reference key="6">
    <citation type="submission" date="2000-07" db="EMBL/GenBank/DDBJ databases">
        <authorList>
            <consortium name="The European IMAGE consortium"/>
        </authorList>
    </citation>
    <scope>NUCLEOTIDE SEQUENCE [LARGE SCALE MRNA] OF 88-811 (ISOFORM 2)</scope>
    <scope>VARIANT PHE-332</scope>
</reference>
<reference key="7">
    <citation type="journal article" date="2005" name="Mol. Cell. Biochem.">
        <title>Characterization of Mesenchyme Homeobox 2 (MEOX2) transcription factor binding to RING finger protein 10.</title>
        <authorList>
            <person name="Lin J."/>
            <person name="Friesen M.T."/>
            <person name="Bocangel P."/>
            <person name="Cheung D."/>
            <person name="Rawszer K."/>
            <person name="Wigle J.T."/>
        </authorList>
    </citation>
    <scope>SUBCELLULAR LOCATION</scope>
    <scope>INTERACTION WITH MEOX2</scope>
</reference>
<reference key="8">
    <citation type="journal article" date="2013" name="J. Proteome Res.">
        <title>Toward a comprehensive characterization of a human cancer cell phosphoproteome.</title>
        <authorList>
            <person name="Zhou H."/>
            <person name="Di Palma S."/>
            <person name="Preisinger C."/>
            <person name="Peng M."/>
            <person name="Polat A.N."/>
            <person name="Heck A.J."/>
            <person name="Mohammed S."/>
        </authorList>
    </citation>
    <scope>PHOSPHORYLATION [LARGE SCALE ANALYSIS] AT SER-5; SER-110 AND SER-128</scope>
    <scope>IDENTIFICATION BY MASS SPECTROMETRY [LARGE SCALE ANALYSIS]</scope>
    <source>
        <tissue>Cervix carcinoma</tissue>
        <tissue>Erythroleukemia</tissue>
    </source>
</reference>
<reference key="9">
    <citation type="journal article" date="2021" name="Cell Rep.">
        <title>The E3 ubiquitin ligase RNF10 modifies 40S ribosomal subunits of ribosomes compromised in translation.</title>
        <authorList>
            <person name="Garzia A."/>
            <person name="Meyer C."/>
            <person name="Tuschl T."/>
        </authorList>
    </citation>
    <scope>FUNCTION</scope>
    <scope>CATALYTIC ACTIVITY</scope>
    <scope>PATHWAY</scope>
    <scope>MUTAGENESIS OF 225-CYS--CYS-228; CYS-225 AND CYS-228</scope>
</reference>
<reference key="10">
    <citation type="journal article" date="2021" name="Cell Rep.">
        <title>iRQC, a surveillance pathway for 40S ribosomal quality control during mRNA translation initiation.</title>
        <authorList>
            <person name="Garshott D.M."/>
            <person name="An H."/>
            <person name="Sundaramoorthy E."/>
            <person name="Leonard M."/>
            <person name="Vicary A."/>
            <person name="Harper J.W."/>
            <person name="Bennett E.J."/>
        </authorList>
    </citation>
    <scope>FUNCTION</scope>
    <scope>CATALYTIC ACTIVITY</scope>
    <scope>PATHWAY</scope>
</reference>
<gene>
    <name evidence="8 12" type="primary">RNF10</name>
    <name evidence="9" type="synonym">KIAA0262</name>
    <name type="synonym">RIE2</name>
</gene>
<dbReference type="EC" id="2.3.2.27" evidence="5 6"/>
<dbReference type="EMBL" id="AB027196">
    <property type="protein sequence ID" value="BAA84708.1"/>
    <property type="molecule type" value="mRNA"/>
</dbReference>
<dbReference type="EMBL" id="D87451">
    <property type="protein sequence ID" value="BAA13392.2"/>
    <property type="molecule type" value="mRNA"/>
</dbReference>
<dbReference type="EMBL" id="BT006974">
    <property type="protein sequence ID" value="AAP35620.1"/>
    <property type="molecule type" value="mRNA"/>
</dbReference>
<dbReference type="EMBL" id="BC016622">
    <property type="protein sequence ID" value="AAH16622.1"/>
    <property type="molecule type" value="mRNA"/>
</dbReference>
<dbReference type="EMBL" id="BC031596">
    <property type="protein sequence ID" value="AAH31596.1"/>
    <property type="molecule type" value="mRNA"/>
</dbReference>
<dbReference type="EMBL" id="BC101709">
    <property type="protein sequence ID" value="AAI01710.1"/>
    <property type="molecule type" value="mRNA"/>
</dbReference>
<dbReference type="EMBL" id="BC101715">
    <property type="protein sequence ID" value="AAI01716.1"/>
    <property type="molecule type" value="mRNA"/>
</dbReference>
<dbReference type="EMBL" id="AL389976">
    <property type="protein sequence ID" value="CAB97533.1"/>
    <property type="molecule type" value="mRNA"/>
</dbReference>
<dbReference type="CCDS" id="CCDS81746.1">
    <molecule id="Q8N5U6-2"/>
</dbReference>
<dbReference type="CCDS" id="CCDS9201.1">
    <molecule id="Q8N5U6-1"/>
</dbReference>
<dbReference type="RefSeq" id="NP_001317403.1">
    <molecule id="Q8N5U6-2"/>
    <property type="nucleotide sequence ID" value="NM_001330474.2"/>
</dbReference>
<dbReference type="RefSeq" id="NP_055683.3">
    <molecule id="Q8N5U6-1"/>
    <property type="nucleotide sequence ID" value="NM_014868.4"/>
</dbReference>
<dbReference type="SMR" id="Q8N5U6"/>
<dbReference type="BioGRID" id="115249">
    <property type="interactions" value="438"/>
</dbReference>
<dbReference type="FunCoup" id="Q8N5U6">
    <property type="interactions" value="3665"/>
</dbReference>
<dbReference type="IntAct" id="Q8N5U6">
    <property type="interactions" value="89"/>
</dbReference>
<dbReference type="MINT" id="Q8N5U6"/>
<dbReference type="STRING" id="9606.ENSP00000415682"/>
<dbReference type="GlyGen" id="Q8N5U6">
    <property type="glycosylation" value="1 site"/>
</dbReference>
<dbReference type="iPTMnet" id="Q8N5U6"/>
<dbReference type="PhosphoSitePlus" id="Q8N5U6"/>
<dbReference type="BioMuta" id="RNF10"/>
<dbReference type="DMDM" id="117949776"/>
<dbReference type="jPOST" id="Q8N5U6"/>
<dbReference type="MassIVE" id="Q8N5U6"/>
<dbReference type="PaxDb" id="9606-ENSP00000322242"/>
<dbReference type="PeptideAtlas" id="Q8N5U6"/>
<dbReference type="ProteomicsDB" id="72099">
    <molecule id="Q8N5U6-1"/>
</dbReference>
<dbReference type="ProteomicsDB" id="72100">
    <molecule id="Q8N5U6-2"/>
</dbReference>
<dbReference type="Pumba" id="Q8N5U6"/>
<dbReference type="Antibodypedia" id="18977">
    <property type="antibodies" value="190 antibodies from 25 providers"/>
</dbReference>
<dbReference type="DNASU" id="9921"/>
<dbReference type="Ensembl" id="ENST00000325954.9">
    <molecule id="Q8N5U6-1"/>
    <property type="protein sequence ID" value="ENSP00000322242.4"/>
    <property type="gene ID" value="ENSG00000022840.17"/>
</dbReference>
<dbReference type="Ensembl" id="ENST00000413266.6">
    <molecule id="Q8N5U6-2"/>
    <property type="protein sequence ID" value="ENSP00000415682.2"/>
    <property type="gene ID" value="ENSG00000022840.17"/>
</dbReference>
<dbReference type="GeneID" id="9921"/>
<dbReference type="KEGG" id="hsa:9921"/>
<dbReference type="MANE-Select" id="ENST00000325954.9">
    <property type="protein sequence ID" value="ENSP00000322242.4"/>
    <property type="RefSeq nucleotide sequence ID" value="NM_014868.5"/>
    <property type="RefSeq protein sequence ID" value="NP_055683.3"/>
</dbReference>
<dbReference type="UCSC" id="uc001typ.5">
    <molecule id="Q8N5U6-1"/>
    <property type="organism name" value="human"/>
</dbReference>
<dbReference type="AGR" id="HGNC:10055"/>
<dbReference type="CTD" id="9921"/>
<dbReference type="DisGeNET" id="9921"/>
<dbReference type="GeneCards" id="RNF10"/>
<dbReference type="HGNC" id="HGNC:10055">
    <property type="gene designation" value="RNF10"/>
</dbReference>
<dbReference type="HPA" id="ENSG00000022840">
    <property type="expression patterns" value="Low tissue specificity"/>
</dbReference>
<dbReference type="MIM" id="615998">
    <property type="type" value="gene"/>
</dbReference>
<dbReference type="neXtProt" id="NX_Q8N5U6"/>
<dbReference type="OpenTargets" id="ENSG00000022840"/>
<dbReference type="PharmGKB" id="PA34419"/>
<dbReference type="VEuPathDB" id="HostDB:ENSG00000022840"/>
<dbReference type="eggNOG" id="KOG2164">
    <property type="taxonomic scope" value="Eukaryota"/>
</dbReference>
<dbReference type="GeneTree" id="ENSGT00390000001731"/>
<dbReference type="HOGENOM" id="CLU_018206_0_0_1"/>
<dbReference type="InParanoid" id="Q8N5U6"/>
<dbReference type="OMA" id="PRWKKCP"/>
<dbReference type="OrthoDB" id="10064108at2759"/>
<dbReference type="PAN-GO" id="Q8N5U6">
    <property type="GO annotations" value="3 GO annotations based on evolutionary models"/>
</dbReference>
<dbReference type="PhylomeDB" id="Q8N5U6"/>
<dbReference type="TreeFam" id="TF323455"/>
<dbReference type="PathwayCommons" id="Q8N5U6"/>
<dbReference type="SignaLink" id="Q8N5U6"/>
<dbReference type="SIGNOR" id="Q8N5U6"/>
<dbReference type="UniPathway" id="UPA00143"/>
<dbReference type="BioGRID-ORCS" id="9921">
    <property type="hits" value="17 hits in 1198 CRISPR screens"/>
</dbReference>
<dbReference type="ChiTaRS" id="RNF10">
    <property type="organism name" value="human"/>
</dbReference>
<dbReference type="GeneWiki" id="RNF10"/>
<dbReference type="GenomeRNAi" id="9921"/>
<dbReference type="Pharos" id="Q8N5U6">
    <property type="development level" value="Tbio"/>
</dbReference>
<dbReference type="PRO" id="PR:Q8N5U6"/>
<dbReference type="Proteomes" id="UP000005640">
    <property type="component" value="Chromosome 12"/>
</dbReference>
<dbReference type="RNAct" id="Q8N5U6">
    <property type="molecule type" value="protein"/>
</dbReference>
<dbReference type="Bgee" id="ENSG00000022840">
    <property type="expression patterns" value="Expressed in left testis and 205 other cell types or tissues"/>
</dbReference>
<dbReference type="ExpressionAtlas" id="Q8N5U6">
    <property type="expression patterns" value="baseline and differential"/>
</dbReference>
<dbReference type="GO" id="GO:0005737">
    <property type="term" value="C:cytoplasm"/>
    <property type="evidence" value="ECO:0000314"/>
    <property type="project" value="UniProtKB"/>
</dbReference>
<dbReference type="GO" id="GO:0022626">
    <property type="term" value="C:cytosolic ribosome"/>
    <property type="evidence" value="ECO:0000314"/>
    <property type="project" value="UniProt"/>
</dbReference>
<dbReference type="GO" id="GO:0099147">
    <property type="term" value="C:extrinsic component of postsynaptic density membrane"/>
    <property type="evidence" value="ECO:0007669"/>
    <property type="project" value="Ensembl"/>
</dbReference>
<dbReference type="GO" id="GO:0098978">
    <property type="term" value="C:glutamatergic synapse"/>
    <property type="evidence" value="ECO:0007669"/>
    <property type="project" value="Ensembl"/>
</dbReference>
<dbReference type="GO" id="GO:0005634">
    <property type="term" value="C:nucleus"/>
    <property type="evidence" value="ECO:0000250"/>
    <property type="project" value="UniProtKB"/>
</dbReference>
<dbReference type="GO" id="GO:0000976">
    <property type="term" value="F:transcription cis-regulatory region binding"/>
    <property type="evidence" value="ECO:0000250"/>
    <property type="project" value="UniProtKB"/>
</dbReference>
<dbReference type="GO" id="GO:0061630">
    <property type="term" value="F:ubiquitin protein ligase activity"/>
    <property type="evidence" value="ECO:0000314"/>
    <property type="project" value="UniProtKB"/>
</dbReference>
<dbReference type="GO" id="GO:0008270">
    <property type="term" value="F:zinc ion binding"/>
    <property type="evidence" value="ECO:0007669"/>
    <property type="project" value="UniProtKB-KW"/>
</dbReference>
<dbReference type="GO" id="GO:0010626">
    <property type="term" value="P:negative regulation of Schwann cell proliferation"/>
    <property type="evidence" value="ECO:0000250"/>
    <property type="project" value="UniProtKB"/>
</dbReference>
<dbReference type="GO" id="GO:0045893">
    <property type="term" value="P:positive regulation of DNA-templated transcription"/>
    <property type="evidence" value="ECO:0000314"/>
    <property type="project" value="UniProtKB"/>
</dbReference>
<dbReference type="GO" id="GO:0031643">
    <property type="term" value="P:positive regulation of myelination"/>
    <property type="evidence" value="ECO:0000250"/>
    <property type="project" value="UniProtKB"/>
</dbReference>
<dbReference type="GO" id="GO:0045944">
    <property type="term" value="P:positive regulation of transcription by RNA polymerase II"/>
    <property type="evidence" value="ECO:0000250"/>
    <property type="project" value="UniProtKB"/>
</dbReference>
<dbReference type="GO" id="GO:0099527">
    <property type="term" value="P:postsynapse to nucleus signaling pathway"/>
    <property type="evidence" value="ECO:0007669"/>
    <property type="project" value="Ensembl"/>
</dbReference>
<dbReference type="GO" id="GO:0051865">
    <property type="term" value="P:protein autoubiquitination"/>
    <property type="evidence" value="ECO:0000314"/>
    <property type="project" value="FlyBase"/>
</dbReference>
<dbReference type="GO" id="GO:0006513">
    <property type="term" value="P:protein monoubiquitination"/>
    <property type="evidence" value="ECO:0000314"/>
    <property type="project" value="UniProtKB"/>
</dbReference>
<dbReference type="GO" id="GO:1990116">
    <property type="term" value="P:ribosome-associated ubiquitin-dependent protein catabolic process"/>
    <property type="evidence" value="ECO:0000314"/>
    <property type="project" value="UniProtKB"/>
</dbReference>
<dbReference type="CDD" id="cd16536">
    <property type="entry name" value="RING-HC_RNF10"/>
    <property type="match status" value="1"/>
</dbReference>
<dbReference type="FunFam" id="3.30.40.10:FF:000112">
    <property type="entry name" value="RING finger protein 10"/>
    <property type="match status" value="1"/>
</dbReference>
<dbReference type="Gene3D" id="3.30.40.10">
    <property type="entry name" value="Zinc/RING finger domain, C3HC4 (zinc finger)"/>
    <property type="match status" value="1"/>
</dbReference>
<dbReference type="InterPro" id="IPR039739">
    <property type="entry name" value="MAG2/RNF10"/>
</dbReference>
<dbReference type="InterPro" id="IPR018957">
    <property type="entry name" value="Znf_C3HC4_RING-type"/>
</dbReference>
<dbReference type="InterPro" id="IPR001841">
    <property type="entry name" value="Znf_RING"/>
</dbReference>
<dbReference type="InterPro" id="IPR013083">
    <property type="entry name" value="Znf_RING/FYVE/PHD"/>
</dbReference>
<dbReference type="InterPro" id="IPR017907">
    <property type="entry name" value="Znf_RING_CS"/>
</dbReference>
<dbReference type="PANTHER" id="PTHR12983:SF9">
    <property type="entry name" value="E3 UBIQUITIN-PROTEIN LIGASE RNF10"/>
    <property type="match status" value="1"/>
</dbReference>
<dbReference type="PANTHER" id="PTHR12983">
    <property type="entry name" value="RING FINGER 10 FAMILY MEMBER"/>
    <property type="match status" value="1"/>
</dbReference>
<dbReference type="Pfam" id="PF00097">
    <property type="entry name" value="zf-C3HC4"/>
    <property type="match status" value="1"/>
</dbReference>
<dbReference type="SMART" id="SM00184">
    <property type="entry name" value="RING"/>
    <property type="match status" value="1"/>
</dbReference>
<dbReference type="SUPFAM" id="SSF57850">
    <property type="entry name" value="RING/U-box"/>
    <property type="match status" value="1"/>
</dbReference>
<dbReference type="PROSITE" id="PS00518">
    <property type="entry name" value="ZF_RING_1"/>
    <property type="match status" value="1"/>
</dbReference>
<dbReference type="PROSITE" id="PS50089">
    <property type="entry name" value="ZF_RING_2"/>
    <property type="match status" value="1"/>
</dbReference>